<reference key="1">
    <citation type="journal article" date="2004" name="Nature">
        <title>Genome evolution in yeasts.</title>
        <authorList>
            <person name="Dujon B."/>
            <person name="Sherman D."/>
            <person name="Fischer G."/>
            <person name="Durrens P."/>
            <person name="Casaregola S."/>
            <person name="Lafontaine I."/>
            <person name="de Montigny J."/>
            <person name="Marck C."/>
            <person name="Neuveglise C."/>
            <person name="Talla E."/>
            <person name="Goffard N."/>
            <person name="Frangeul L."/>
            <person name="Aigle M."/>
            <person name="Anthouard V."/>
            <person name="Babour A."/>
            <person name="Barbe V."/>
            <person name="Barnay S."/>
            <person name="Blanchin S."/>
            <person name="Beckerich J.-M."/>
            <person name="Beyne E."/>
            <person name="Bleykasten C."/>
            <person name="Boisrame A."/>
            <person name="Boyer J."/>
            <person name="Cattolico L."/>
            <person name="Confanioleri F."/>
            <person name="de Daruvar A."/>
            <person name="Despons L."/>
            <person name="Fabre E."/>
            <person name="Fairhead C."/>
            <person name="Ferry-Dumazet H."/>
            <person name="Groppi A."/>
            <person name="Hantraye F."/>
            <person name="Hennequin C."/>
            <person name="Jauniaux N."/>
            <person name="Joyet P."/>
            <person name="Kachouri R."/>
            <person name="Kerrest A."/>
            <person name="Koszul R."/>
            <person name="Lemaire M."/>
            <person name="Lesur I."/>
            <person name="Ma L."/>
            <person name="Muller H."/>
            <person name="Nicaud J.-M."/>
            <person name="Nikolski M."/>
            <person name="Oztas S."/>
            <person name="Ozier-Kalogeropoulos O."/>
            <person name="Pellenz S."/>
            <person name="Potier S."/>
            <person name="Richard G.-F."/>
            <person name="Straub M.-L."/>
            <person name="Suleau A."/>
            <person name="Swennen D."/>
            <person name="Tekaia F."/>
            <person name="Wesolowski-Louvel M."/>
            <person name="Westhof E."/>
            <person name="Wirth B."/>
            <person name="Zeniou-Meyer M."/>
            <person name="Zivanovic Y."/>
            <person name="Bolotin-Fukuhara M."/>
            <person name="Thierry A."/>
            <person name="Bouchier C."/>
            <person name="Caudron B."/>
            <person name="Scarpelli C."/>
            <person name="Gaillardin C."/>
            <person name="Weissenbach J."/>
            <person name="Wincker P."/>
            <person name="Souciet J.-L."/>
        </authorList>
    </citation>
    <scope>NUCLEOTIDE SEQUENCE [LARGE SCALE GENOMIC DNA]</scope>
    <source>
        <strain>ATCC 8585 / CBS 2359 / DSM 70799 / NBRC 1267 / NRRL Y-1140 / WM37</strain>
    </source>
</reference>
<feature type="transit peptide" description="Mitochondrion" evidence="2">
    <location>
        <begin position="1"/>
        <end position="33"/>
    </location>
</feature>
<feature type="chain" id="PRO_0000043157" description="Presequence translocated-associated motor subunit PAM17, mitochondrial">
    <location>
        <begin position="34"/>
        <end position="196"/>
    </location>
</feature>
<feature type="transmembrane region" description="Helical" evidence="2">
    <location>
        <begin position="68"/>
        <end position="88"/>
    </location>
</feature>
<feature type="transmembrane region" description="Helical" evidence="2">
    <location>
        <begin position="106"/>
        <end position="126"/>
    </location>
</feature>
<evidence type="ECO:0000250" key="1"/>
<evidence type="ECO:0000255" key="2"/>
<evidence type="ECO:0000305" key="3"/>
<keyword id="KW-0472">Membrane</keyword>
<keyword id="KW-0496">Mitochondrion</keyword>
<keyword id="KW-0999">Mitochondrion inner membrane</keyword>
<keyword id="KW-0653">Protein transport</keyword>
<keyword id="KW-1185">Reference proteome</keyword>
<keyword id="KW-0809">Transit peptide</keyword>
<keyword id="KW-0811">Translocation</keyword>
<keyword id="KW-0812">Transmembrane</keyword>
<keyword id="KW-1133">Transmembrane helix</keyword>
<keyword id="KW-0813">Transport</keyword>
<protein>
    <recommendedName>
        <fullName>Presequence translocated-associated motor subunit PAM17, mitochondrial</fullName>
    </recommendedName>
</protein>
<name>PAM17_KLULA</name>
<dbReference type="EMBL" id="CR382121">
    <property type="protein sequence ID" value="CAH02859.1"/>
    <property type="molecule type" value="Genomic_DNA"/>
</dbReference>
<dbReference type="RefSeq" id="XP_451271.1">
    <property type="nucleotide sequence ID" value="XM_451271.1"/>
</dbReference>
<dbReference type="FunCoup" id="Q6CXR8">
    <property type="interactions" value="66"/>
</dbReference>
<dbReference type="STRING" id="284590.Q6CXR8"/>
<dbReference type="PaxDb" id="284590-Q6CXR8"/>
<dbReference type="KEGG" id="kla:KLLA0_A06083g"/>
<dbReference type="eggNOG" id="ENOG502S1B1">
    <property type="taxonomic scope" value="Eukaryota"/>
</dbReference>
<dbReference type="HOGENOM" id="CLU_068297_2_0_1"/>
<dbReference type="InParanoid" id="Q6CXR8"/>
<dbReference type="OMA" id="MIFGFDP"/>
<dbReference type="Proteomes" id="UP000000598">
    <property type="component" value="Chromosome A"/>
</dbReference>
<dbReference type="GO" id="GO:0001405">
    <property type="term" value="C:PAM complex, Tim23 associated import motor"/>
    <property type="evidence" value="ECO:0007669"/>
    <property type="project" value="InterPro"/>
</dbReference>
<dbReference type="GO" id="GO:0030150">
    <property type="term" value="P:protein import into mitochondrial matrix"/>
    <property type="evidence" value="ECO:0007669"/>
    <property type="project" value="TreeGrafter"/>
</dbReference>
<dbReference type="InterPro" id="IPR013875">
    <property type="entry name" value="Pam17"/>
</dbReference>
<dbReference type="PANTHER" id="PTHR28021">
    <property type="entry name" value="PRESEQUENCE TRANSLOCATED-ASSOCIATED MOTOR SUBUNIT PAM17, MITOCHONDRIAL"/>
    <property type="match status" value="1"/>
</dbReference>
<dbReference type="PANTHER" id="PTHR28021:SF1">
    <property type="entry name" value="PRESEQUENCE TRANSLOCATED-ASSOCIATED MOTOR SUBUNIT PAM17, MITOCHONDRIAL"/>
    <property type="match status" value="1"/>
</dbReference>
<dbReference type="Pfam" id="PF08566">
    <property type="entry name" value="Pam17"/>
    <property type="match status" value="1"/>
</dbReference>
<proteinExistence type="inferred from homology"/>
<sequence length="196" mass="22071">MLRLGINLQNRLLVGLNGQSLLKRAVTRNAVAIRMNSTNAGKTASHEMTWPEFFKLRKKERVFNTASSVATAIVFVNGSWFYFSTLEIDPTQTIFGFDPLMAITAGMITCAAVGWLLGPIVGTALFKATSGPKLLQFQEKQLSFLAKIQKNRVNPQSQSFSNPVPDYYGEKINSIPQYRQWLRDCHSYKRKASEFL</sequence>
<gene>
    <name type="primary">PAM17</name>
    <name type="ordered locus">KLLA0A06083g</name>
</gene>
<accession>Q6CXR8</accession>
<organism>
    <name type="scientific">Kluyveromyces lactis (strain ATCC 8585 / CBS 2359 / DSM 70799 / NBRC 1267 / NRRL Y-1140 / WM37)</name>
    <name type="common">Yeast</name>
    <name type="synonym">Candida sphaerica</name>
    <dbReference type="NCBI Taxonomy" id="284590"/>
    <lineage>
        <taxon>Eukaryota</taxon>
        <taxon>Fungi</taxon>
        <taxon>Dikarya</taxon>
        <taxon>Ascomycota</taxon>
        <taxon>Saccharomycotina</taxon>
        <taxon>Saccharomycetes</taxon>
        <taxon>Saccharomycetales</taxon>
        <taxon>Saccharomycetaceae</taxon>
        <taxon>Kluyveromyces</taxon>
    </lineage>
</organism>
<comment type="function">
    <text evidence="1">Component of the PAM complex, a complex required for the translocation of transit peptide-containing proteins from the inner membrane into the mitochondrial matrix in an ATP-dependent manner.</text>
</comment>
<comment type="subunit">
    <text evidence="1">Component of the PAM complex, at least composed of mtHsp70 (SSC1), MGE1, TIM44, PAM16, PAM17 and PAM18.</text>
</comment>
<comment type="subcellular location">
    <subcellularLocation>
        <location evidence="1">Mitochondrion inner membrane</location>
        <topology evidence="1">Multi-pass membrane protein</topology>
    </subcellularLocation>
</comment>
<comment type="similarity">
    <text evidence="3">Belongs to the PAM17 family.</text>
</comment>